<name>MKC1_CANAX</name>
<comment type="catalytic activity">
    <reaction>
        <text>L-seryl-[protein] + ATP = O-phospho-L-seryl-[protein] + ADP + H(+)</text>
        <dbReference type="Rhea" id="RHEA:17989"/>
        <dbReference type="Rhea" id="RHEA-COMP:9863"/>
        <dbReference type="Rhea" id="RHEA-COMP:11604"/>
        <dbReference type="ChEBI" id="CHEBI:15378"/>
        <dbReference type="ChEBI" id="CHEBI:29999"/>
        <dbReference type="ChEBI" id="CHEBI:30616"/>
        <dbReference type="ChEBI" id="CHEBI:83421"/>
        <dbReference type="ChEBI" id="CHEBI:456216"/>
        <dbReference type="EC" id="2.7.11.24"/>
    </reaction>
</comment>
<comment type="catalytic activity">
    <reaction>
        <text>L-threonyl-[protein] + ATP = O-phospho-L-threonyl-[protein] + ADP + H(+)</text>
        <dbReference type="Rhea" id="RHEA:46608"/>
        <dbReference type="Rhea" id="RHEA-COMP:11060"/>
        <dbReference type="Rhea" id="RHEA-COMP:11605"/>
        <dbReference type="ChEBI" id="CHEBI:15378"/>
        <dbReference type="ChEBI" id="CHEBI:30013"/>
        <dbReference type="ChEBI" id="CHEBI:30616"/>
        <dbReference type="ChEBI" id="CHEBI:61977"/>
        <dbReference type="ChEBI" id="CHEBI:456216"/>
        <dbReference type="EC" id="2.7.11.24"/>
    </reaction>
</comment>
<comment type="cofactor">
    <cofactor evidence="1">
        <name>Mg(2+)</name>
        <dbReference type="ChEBI" id="CHEBI:18420"/>
    </cofactor>
</comment>
<comment type="activity regulation">
    <text evidence="1">Activated by tyrosine and threonine phosphorylation.</text>
</comment>
<comment type="domain">
    <text>The TXY motif contains the threonine and tyrosine residues whose phosphorylation activates the MAP kinases.</text>
</comment>
<comment type="PTM">
    <text evidence="1">Dually phosphorylated on Thr-211 and Tyr-213, which activates the enzyme.</text>
</comment>
<comment type="similarity">
    <text evidence="5">Belongs to the protein kinase superfamily. CMGC Ser/Thr protein kinase family. MAP kinase subfamily.</text>
</comment>
<proteinExistence type="inferred from homology"/>
<protein>
    <recommendedName>
        <fullName>Mitogen-activated protein kinase MKC1</fullName>
        <shortName>MAP kinase MKC1</shortName>
        <ecNumber>2.7.11.24</ecNumber>
    </recommendedName>
</protein>
<keyword id="KW-0067">ATP-binding</keyword>
<keyword id="KW-0131">Cell cycle</keyword>
<keyword id="KW-0418">Kinase</keyword>
<keyword id="KW-0547">Nucleotide-binding</keyword>
<keyword id="KW-0597">Phosphoprotein</keyword>
<keyword id="KW-0723">Serine/threonine-protein kinase</keyword>
<keyword id="KW-0808">Transferase</keyword>
<dbReference type="EC" id="2.7.11.24"/>
<dbReference type="EMBL" id="X76708">
    <property type="protein sequence ID" value="CAA54129.1"/>
    <property type="molecule type" value="Genomic_DNA"/>
</dbReference>
<dbReference type="SMR" id="P43068"/>
<dbReference type="EnsemblFungi" id="CR_00120C_A-T">
    <property type="protein sequence ID" value="CR_00120C_A-T-p1"/>
    <property type="gene ID" value="CR_00120C_A"/>
</dbReference>
<dbReference type="VEuPathDB" id="FungiDB:CAWG_01373"/>
<dbReference type="VEuPathDB" id="FungiDB:CR_00120C_A"/>
<dbReference type="PHI-base" id="PHI:67"/>
<dbReference type="PHI-base" id="PHI:6843"/>
<dbReference type="GO" id="GO:0005737">
    <property type="term" value="C:cytoplasm"/>
    <property type="evidence" value="ECO:0007669"/>
    <property type="project" value="EnsemblFungi"/>
</dbReference>
<dbReference type="GO" id="GO:0005634">
    <property type="term" value="C:nucleus"/>
    <property type="evidence" value="ECO:0007669"/>
    <property type="project" value="EnsemblFungi"/>
</dbReference>
<dbReference type="GO" id="GO:0005524">
    <property type="term" value="F:ATP binding"/>
    <property type="evidence" value="ECO:0007669"/>
    <property type="project" value="UniProtKB-KW"/>
</dbReference>
<dbReference type="GO" id="GO:0004707">
    <property type="term" value="F:MAP kinase activity"/>
    <property type="evidence" value="ECO:0007669"/>
    <property type="project" value="UniProtKB-EC"/>
</dbReference>
<dbReference type="GO" id="GO:0106310">
    <property type="term" value="F:protein serine kinase activity"/>
    <property type="evidence" value="ECO:0007669"/>
    <property type="project" value="RHEA"/>
</dbReference>
<dbReference type="GO" id="GO:0000196">
    <property type="term" value="P:cell integrity MAPK cascade"/>
    <property type="evidence" value="ECO:0007669"/>
    <property type="project" value="EnsemblFungi"/>
</dbReference>
<dbReference type="GO" id="GO:1902660">
    <property type="term" value="P:negative regulation of glucose mediated signaling pathway"/>
    <property type="evidence" value="ECO:0007669"/>
    <property type="project" value="EnsemblFungi"/>
</dbReference>
<dbReference type="GO" id="GO:1902413">
    <property type="term" value="P:negative regulation of mitotic cytokinesis"/>
    <property type="evidence" value="ECO:0007669"/>
    <property type="project" value="EnsemblFungi"/>
</dbReference>
<dbReference type="GO" id="GO:1905665">
    <property type="term" value="P:positive regulation of calcium ion import across plasma membrane"/>
    <property type="evidence" value="ECO:0007669"/>
    <property type="project" value="EnsemblFungi"/>
</dbReference>
<dbReference type="GO" id="GO:0050850">
    <property type="term" value="P:positive regulation of calcium-mediated signaling"/>
    <property type="evidence" value="ECO:0007669"/>
    <property type="project" value="EnsemblFungi"/>
</dbReference>
<dbReference type="GO" id="GO:0032995">
    <property type="term" value="P:regulation of fungal-type cell wall biogenesis"/>
    <property type="evidence" value="ECO:0007669"/>
    <property type="project" value="EnsemblFungi"/>
</dbReference>
<dbReference type="CDD" id="cd07857">
    <property type="entry name" value="STKc_MPK1"/>
    <property type="match status" value="1"/>
</dbReference>
<dbReference type="FunFam" id="1.10.510.10:FF:000013">
    <property type="entry name" value="Mitogen-activated protein kinase"/>
    <property type="match status" value="1"/>
</dbReference>
<dbReference type="Gene3D" id="3.30.200.20">
    <property type="entry name" value="Phosphorylase Kinase, domain 1"/>
    <property type="match status" value="1"/>
</dbReference>
<dbReference type="Gene3D" id="1.10.510.10">
    <property type="entry name" value="Transferase(Phosphotransferase) domain 1"/>
    <property type="match status" value="1"/>
</dbReference>
<dbReference type="InterPro" id="IPR011009">
    <property type="entry name" value="Kinase-like_dom_sf"/>
</dbReference>
<dbReference type="InterPro" id="IPR050117">
    <property type="entry name" value="MAP_kinase"/>
</dbReference>
<dbReference type="InterPro" id="IPR003527">
    <property type="entry name" value="MAP_kinase_CS"/>
</dbReference>
<dbReference type="InterPro" id="IPR008352">
    <property type="entry name" value="MAPK_p38-like"/>
</dbReference>
<dbReference type="InterPro" id="IPR000719">
    <property type="entry name" value="Prot_kinase_dom"/>
</dbReference>
<dbReference type="InterPro" id="IPR008271">
    <property type="entry name" value="Ser/Thr_kinase_AS"/>
</dbReference>
<dbReference type="PANTHER" id="PTHR24055">
    <property type="entry name" value="MITOGEN-ACTIVATED PROTEIN KINASE"/>
    <property type="match status" value="1"/>
</dbReference>
<dbReference type="Pfam" id="PF00069">
    <property type="entry name" value="Pkinase"/>
    <property type="match status" value="1"/>
</dbReference>
<dbReference type="PRINTS" id="PR01773">
    <property type="entry name" value="P38MAPKINASE"/>
</dbReference>
<dbReference type="SMART" id="SM00220">
    <property type="entry name" value="S_TKc"/>
    <property type="match status" value="1"/>
</dbReference>
<dbReference type="SUPFAM" id="SSF56112">
    <property type="entry name" value="Protein kinase-like (PK-like)"/>
    <property type="match status" value="1"/>
</dbReference>
<dbReference type="PROSITE" id="PS01351">
    <property type="entry name" value="MAPK"/>
    <property type="match status" value="1"/>
</dbReference>
<dbReference type="PROSITE" id="PS50011">
    <property type="entry name" value="PROTEIN_KINASE_DOM"/>
    <property type="match status" value="1"/>
</dbReference>
<dbReference type="PROSITE" id="PS00108">
    <property type="entry name" value="PROTEIN_KINASE_ST"/>
    <property type="match status" value="1"/>
</dbReference>
<organism>
    <name type="scientific">Candida albicans</name>
    <name type="common">Yeast</name>
    <dbReference type="NCBI Taxonomy" id="5476"/>
    <lineage>
        <taxon>Eukaryota</taxon>
        <taxon>Fungi</taxon>
        <taxon>Dikarya</taxon>
        <taxon>Ascomycota</taxon>
        <taxon>Saccharomycotina</taxon>
        <taxon>Pichiomycetes</taxon>
        <taxon>Debaryomycetaceae</taxon>
        <taxon>Candida/Lodderomyces clade</taxon>
        <taxon>Candida</taxon>
    </lineage>
</organism>
<sequence length="501" mass="58192">MDQQEAPIYYGRSVNKVYNQEFIIDSRFKIVKELGHGAYGIVCSAKYDNGSKKVPDSNNGNASSSANASFVAIKKITNIFSKNILCKRALRELKLLQFFRGHKNITCLYDLDIIPNPMTGEFNEIYLYEELMECDMHQIIRSGQPLSDQHYQSFIYQVLCGLNFIHSADVLHRDLKPGNLLVNADCELKICDFGLARGFSENPDENAGFMTEYVATRWYRAPEIMLSFTNYTKAIDIWSVGCILAELLGGKPLFRGKDYVDQLNQILMILGTPPESTLQRIGSHRAQNYVRSLPITRKASYEELFPDANPLALDLLERMLTLDPRERITVRDALNHKYLELWHDPKEEIECQVKFDFKSFETVDGLDEMKQLIMDEVQKFREFVRKPIEEQQRIQMQLHMQKREEQRQEEEEKELLEQQRQFPAQESMDISQTPYNNLETNIGTPQVEDDYPRPQELDEFTFSNLESSSSMNLFQDMAKPSGEEYIKLEEELGFGLDWCYV</sequence>
<accession>P43068</accession>
<evidence type="ECO:0000250" key="1"/>
<evidence type="ECO:0000255" key="2">
    <source>
        <dbReference type="PROSITE-ProRule" id="PRU00159"/>
    </source>
</evidence>
<evidence type="ECO:0000255" key="3">
    <source>
        <dbReference type="PROSITE-ProRule" id="PRU10027"/>
    </source>
</evidence>
<evidence type="ECO:0000256" key="4">
    <source>
        <dbReference type="SAM" id="MobiDB-lite"/>
    </source>
</evidence>
<evidence type="ECO:0000305" key="5"/>
<gene>
    <name type="primary">MKC1</name>
</gene>
<reference key="1">
    <citation type="journal article" date="1995" name="Mol. Cell. Biol.">
        <title>Functional characterization of the MKC1 gene of Candida albicans, which encodes a mitogen-activated protein kinase homolog related to cell integrity.</title>
        <authorList>
            <person name="Navarro-Garcia F."/>
            <person name="Sanchez M."/>
            <person name="Pla J."/>
            <person name="Nombela C."/>
        </authorList>
    </citation>
    <scope>NUCLEOTIDE SEQUENCE [GENOMIC DNA]</scope>
    <source>
        <strain>ATCC 64385 / 1001</strain>
    </source>
</reference>
<feature type="chain" id="PRO_0000186334" description="Mitogen-activated protein kinase MKC1">
    <location>
        <begin position="1"/>
        <end position="501"/>
    </location>
</feature>
<feature type="domain" description="Protein kinase" evidence="2">
    <location>
        <begin position="28"/>
        <end position="339"/>
    </location>
</feature>
<feature type="region of interest" description="Disordered" evidence="4">
    <location>
        <begin position="400"/>
        <end position="450"/>
    </location>
</feature>
<feature type="short sequence motif" description="TXY">
    <location>
        <begin position="211"/>
        <end position="213"/>
    </location>
</feature>
<feature type="compositionally biased region" description="Polar residues" evidence="4">
    <location>
        <begin position="422"/>
        <end position="444"/>
    </location>
</feature>
<feature type="active site" description="Proton acceptor" evidence="2 3">
    <location>
        <position position="174"/>
    </location>
</feature>
<feature type="binding site" evidence="2">
    <location>
        <begin position="34"/>
        <end position="42"/>
    </location>
    <ligand>
        <name>ATP</name>
        <dbReference type="ChEBI" id="CHEBI:30616"/>
    </ligand>
</feature>
<feature type="binding site" evidence="2">
    <location>
        <position position="74"/>
    </location>
    <ligand>
        <name>ATP</name>
        <dbReference type="ChEBI" id="CHEBI:30616"/>
    </ligand>
</feature>
<feature type="modified residue" description="Phosphothreonine" evidence="1">
    <location>
        <position position="211"/>
    </location>
</feature>
<feature type="modified residue" description="Phosphotyrosine" evidence="1">
    <location>
        <position position="213"/>
    </location>
</feature>